<proteinExistence type="evidence at protein level"/>
<keyword id="KW-0175">Coiled coil</keyword>
<keyword id="KW-0597">Phosphoprotein</keyword>
<keyword id="KW-0691">RNA editing</keyword>
<keyword id="KW-0693">Viral RNA replication</keyword>
<keyword id="KW-0946">Virion</keyword>
<dbReference type="EMBL" id="JN012242">
    <property type="protein sequence ID" value="AEI98826.1"/>
    <property type="molecule type" value="Viral_cRNA"/>
</dbReference>
<dbReference type="EMBL" id="JN635498">
    <property type="protein sequence ID" value="AEY76112.1"/>
    <property type="molecule type" value="Viral_cRNA"/>
</dbReference>
<dbReference type="EMBL" id="JX287385">
    <property type="protein sequence ID" value="AFO62136.1"/>
    <property type="molecule type" value="Viral_cRNA"/>
</dbReference>
<dbReference type="EMBL" id="JX287387">
    <property type="protein sequence ID" value="AFO62154.1"/>
    <property type="molecule type" value="Viral_cRNA"/>
</dbReference>
<dbReference type="EMBL" id="JX287390">
    <property type="protein sequence ID" value="AFO62181.1"/>
    <property type="molecule type" value="Viral_cRNA"/>
</dbReference>
<dbReference type="EMBL" id="JX287391">
    <property type="protein sequence ID" value="AFO62190.1"/>
    <property type="molecule type" value="Viral_cRNA"/>
</dbReference>
<dbReference type="EMBL" id="KF481689">
    <property type="protein sequence ID" value="AHA38271.1"/>
    <property type="molecule type" value="Viral_cRNA"/>
</dbReference>
<dbReference type="EMBL" id="MG986394">
    <property type="protein sequence ID" value="AWI67311.1"/>
    <property type="molecule type" value="Viral_cRNA"/>
</dbReference>
<dbReference type="EMBL" id="MG986419">
    <property type="protein sequence ID" value="AWI67536.1"/>
    <property type="molecule type" value="Viral_cRNA"/>
</dbReference>
<dbReference type="EMBL" id="MG986432">
    <property type="protein sequence ID" value="AWI67653.1"/>
    <property type="molecule type" value="Viral_cRNA"/>
</dbReference>
<dbReference type="EMBL" id="MG986434">
    <property type="protein sequence ID" value="AWI67671.1"/>
    <property type="molecule type" value="Viral_cRNA"/>
</dbReference>
<dbReference type="EMBL" id="MG986457">
    <property type="protein sequence ID" value="AWI67878.1"/>
    <property type="molecule type" value="Viral_cRNA"/>
</dbReference>
<dbReference type="EMBL" id="MG986458">
    <property type="protein sequence ID" value="AWI67887.1"/>
    <property type="molecule type" value="Viral_cRNA"/>
</dbReference>
<dbReference type="EMBL" id="MG986460">
    <property type="protein sequence ID" value="AWI67905.1"/>
    <property type="molecule type" value="Viral_cRNA"/>
</dbReference>
<dbReference type="EMBL" id="MT238684">
    <property type="protein sequence ID" value="QJD56047.1"/>
    <property type="molecule type" value="Viral_cRNA"/>
</dbReference>
<dbReference type="EMBL" id="MT238688">
    <property type="protein sequence ID" value="QJD56083.1"/>
    <property type="molecule type" value="Viral_cRNA"/>
</dbReference>
<dbReference type="SMR" id="F8V2V0"/>
<dbReference type="Proteomes" id="UP000097139">
    <property type="component" value="Genome"/>
</dbReference>
<dbReference type="Proteomes" id="UP000099984">
    <property type="component" value="Genome"/>
</dbReference>
<dbReference type="Proteomes" id="UP000108716">
    <property type="component" value="Genome"/>
</dbReference>
<dbReference type="Proteomes" id="UP000141977">
    <property type="component" value="Genome"/>
</dbReference>
<dbReference type="Proteomes" id="UP000142179">
    <property type="component" value="Genome"/>
</dbReference>
<dbReference type="Proteomes" id="UP000160412">
    <property type="component" value="Genome"/>
</dbReference>
<dbReference type="Proteomes" id="UP000164822">
    <property type="component" value="Genome"/>
</dbReference>
<dbReference type="GO" id="GO:0039689">
    <property type="term" value="P:negative stranded viral RNA replication"/>
    <property type="evidence" value="ECO:0000314"/>
    <property type="project" value="UniProtKB"/>
</dbReference>
<dbReference type="GO" id="GO:0039697">
    <property type="term" value="P:negative stranded viral RNA transcription"/>
    <property type="evidence" value="ECO:0000314"/>
    <property type="project" value="UniProtKB"/>
</dbReference>
<dbReference type="CDD" id="cd21031">
    <property type="entry name" value="MEV_P-protein-C_like"/>
    <property type="match status" value="1"/>
</dbReference>
<dbReference type="Gene3D" id="1.20.5.300">
    <property type="match status" value="1"/>
</dbReference>
<dbReference type="Gene3D" id="1.10.8.10">
    <property type="entry name" value="DNA helicase RuvA subunit, C-terminal domain"/>
    <property type="match status" value="1"/>
</dbReference>
<dbReference type="InterPro" id="IPR004897">
    <property type="entry name" value="P/V_Pprotein_paramyxoviral"/>
</dbReference>
<dbReference type="Pfam" id="PF03210">
    <property type="entry name" value="Paramyx_P_V_C"/>
    <property type="match status" value="1"/>
</dbReference>
<feature type="chain" id="PRO_0000462024" description="Phosphoprotein">
    <location>
        <begin position="1"/>
        <end position="391"/>
    </location>
</feature>
<feature type="region of interest" description="Disordered" evidence="7">
    <location>
        <begin position="82"/>
        <end position="101"/>
    </location>
</feature>
<feature type="region of interest" description="Disordered" evidence="7">
    <location>
        <begin position="143"/>
        <end position="208"/>
    </location>
</feature>
<feature type="region of interest" description="Interaction with the nucleoprotein" evidence="1">
    <location>
        <begin position="343"/>
        <end position="391"/>
    </location>
</feature>
<feature type="region of interest" description="X domain (XD)" evidence="5">
    <location>
        <begin position="348"/>
        <end position="391"/>
    </location>
</feature>
<feature type="coiled-coil region" evidence="6">
    <location>
        <begin position="218"/>
        <end position="245"/>
    </location>
</feature>
<feature type="compositionally biased region" description="Polar residues" evidence="7">
    <location>
        <begin position="198"/>
        <end position="208"/>
    </location>
</feature>
<feature type="modified residue" description="Phosphothreonine" evidence="9">
    <location>
        <position position="10"/>
    </location>
</feature>
<feature type="modified residue" description="Phosphothreonine" evidence="9">
    <location>
        <position position="16"/>
    </location>
</feature>
<feature type="modified residue" description="Phosphothreonine" evidence="9">
    <location>
        <position position="39"/>
    </location>
</feature>
<feature type="modified residue" description="Phosphoserine" evidence="9">
    <location>
        <position position="69"/>
    </location>
</feature>
<feature type="modified residue" description="Phosphothreonine" evidence="9">
    <location>
        <position position="91"/>
    </location>
</feature>
<feature type="modified residue" description="Phosphothreonine" evidence="9">
    <location>
        <position position="150"/>
    </location>
</feature>
<feature type="modified residue" description="Phosphothreonine" evidence="9">
    <location>
        <position position="165"/>
    </location>
</feature>
<feature type="modified residue" description="Phosphoserine" evidence="9">
    <location>
        <position position="188"/>
    </location>
</feature>
<feature type="modified residue" description="Phosphothreonine" evidence="9">
    <location>
        <position position="250"/>
    </location>
</feature>
<feature type="modified residue" description="Phosphoserine" evidence="9">
    <location>
        <position position="257"/>
    </location>
</feature>
<feature type="modified residue" description="Phosphothreonine" evidence="9">
    <location>
        <position position="258"/>
    </location>
</feature>
<feature type="modified residue" description="Phosphothreonine" evidence="9">
    <location>
        <position position="282"/>
    </location>
</feature>
<feature type="modified residue" description="Phosphoserine" evidence="3">
    <location>
        <position position="292"/>
    </location>
</feature>
<feature type="modified residue" description="Phosphoserine" evidence="3">
    <location>
        <position position="294"/>
    </location>
</feature>
<feature type="modified residue" description="Phosphothreonine" evidence="3">
    <location>
        <position position="298"/>
    </location>
</feature>
<feature type="modified residue" description="Phosphoserine" evidence="3">
    <location>
        <position position="301"/>
    </location>
</feature>
<feature type="modified residue" description="Phosphoserine" evidence="9">
    <location>
        <position position="374"/>
    </location>
</feature>
<feature type="modified residue" description="Phosphothreonine" evidence="9">
    <location>
        <position position="375"/>
    </location>
</feature>
<feature type="mutagenesis site" description="Reduced phosphorylation level of P. Higher level of viral RNA transcription." evidence="9">
    <original>T</original>
    <variation>A</variation>
    <location>
        <position position="101"/>
    </location>
</feature>
<gene>
    <name type="primary">V/P</name>
    <name type="synonym">P</name>
    <name type="synonym">V</name>
</gene>
<accession>F8V2V0</accession>
<evidence type="ECO:0000250" key="1">
    <source>
        <dbReference type="UniProtKB" id="C0JJ97"/>
    </source>
</evidence>
<evidence type="ECO:0000250" key="2">
    <source>
        <dbReference type="UniProtKB" id="P06162"/>
    </source>
</evidence>
<evidence type="ECO:0000250" key="3">
    <source>
        <dbReference type="UniProtKB" id="P16072"/>
    </source>
</evidence>
<evidence type="ECO:0000250" key="4">
    <source>
        <dbReference type="UniProtKB" id="Q77M42"/>
    </source>
</evidence>
<evidence type="ECO:0000250" key="5">
    <source>
        <dbReference type="UniProtKB" id="Q9WMB4"/>
    </source>
</evidence>
<evidence type="ECO:0000255" key="6"/>
<evidence type="ECO:0000256" key="7">
    <source>
        <dbReference type="SAM" id="MobiDB-lite"/>
    </source>
</evidence>
<evidence type="ECO:0000269" key="8">
    <source>
    </source>
</evidence>
<evidence type="ECO:0000269" key="9">
    <source>
    </source>
</evidence>
<evidence type="ECO:0000305" key="10"/>
<name>PHOSP_MUMPV</name>
<reference key="1">
    <citation type="journal article" date="2011" name="Virology">
        <title>Rescue of wild-type mumps virus from a strain associated with recent outbreaks helps to define the role of the SH ORF in the pathogenesis of mumps virus.</title>
        <authorList>
            <person name="Xu P."/>
            <person name="Li Z."/>
            <person name="Sun D."/>
            <person name="Lin Y."/>
            <person name="Wu J."/>
            <person name="Rota P.A."/>
            <person name="He B."/>
        </authorList>
    </citation>
    <scope>NUCLEOTIDE SEQUENCE [GENOMIC RNA]</scope>
    <source>
        <strain>MuV-IA</strain>
    </source>
</reference>
<reference key="2">
    <citation type="submission" date="2011-08" db="EMBL/GenBank/DDBJ databases">
        <title>Antigenic Differences between Vaccine and Circulating Wild Type Mumps Viruses Decreases Neutralization Capacity of Vaccine Induced Antibodies.</title>
        <authorList>
            <person name="Santak M."/>
            <person name="Lang Balija M."/>
            <person name="Ivancic Jelecki J."/>
            <person name="Kosutic Gulija T."/>
            <person name="Ljubin Sternak S."/>
            <person name="Forcic D."/>
        </authorList>
    </citation>
    <scope>NUCLEOTIDE SEQUENCE [GENOMIC RNA]</scope>
    <source>
        <strain>MuV/Split.CRO/05.11</strain>
    </source>
</reference>
<reference key="3">
    <citation type="submission" date="2012-06" db="EMBL/GenBank/DDBJ databases">
        <authorList>
            <person name="Kirkness E.F."/>
            <person name="Halpin R."/>
            <person name="Bera J."/>
            <person name="Fedorova N."/>
            <person name="Overton L."/>
            <person name="Stockwell T."/>
            <person name="Amedeo P."/>
            <person name="Bishop B."/>
            <person name="Chen H."/>
            <person name="Edworthy P."/>
            <person name="Gupta N."/>
            <person name="Katzel D."/>
            <person name="Li K."/>
            <person name="Schobel S."/>
            <person name="Shrivastava S."/>
            <person name="Thovarai V."/>
            <person name="Wang S."/>
            <person name="Bankamp B."/>
            <person name="Lopareva E."/>
            <person name="Wentworth D.E."/>
            <person name="Bellini W."/>
            <person name="Rota P."/>
        </authorList>
    </citation>
    <scope>NUCLEOTIDE SEQUENCE [GENOMIC RNA]</scope>
    <source>
        <strain>MuV/Iowa.USA/06</strain>
        <strain>MuV/New York.USA/40.09/1</strain>
        <strain>MuV/New York.USA/40.09/4</strain>
        <strain>MuV/New York.USA/53.09/3</strain>
    </source>
</reference>
<reference key="4">
    <citation type="journal article" date="2015" name="Microbes Infect.">
        <title>Accumulation of defective interfering viral particles in only a few passages in Vero cells attenuates mumps virus neurovirulence.</title>
        <authorList>
            <person name="Santak M."/>
            <person name="Markusic M."/>
            <person name="Balija M.L."/>
            <person name="Kopac S.K."/>
            <person name="Jug R."/>
            <person name="Orvell C."/>
            <person name="Tomac J."/>
            <person name="Forcic D."/>
        </authorList>
    </citation>
    <scope>NUCLEOTIDE SEQUENCE [GENOMIC RNA]</scope>
    <source>
        <strain>MuV/Zagreb.HRV/28.12</strain>
    </source>
</reference>
<reference key="5">
    <citation type="submission" date="2018-02" db="EMBL/GenBank/DDBJ databases">
        <title>Mumps rubulavirus sample sequencing from the 2016-2017 outbreak in Massachusetts.</title>
        <authorList>
            <person name="Bankamp B."/>
            <person name="Byrne E.H."/>
            <person name="Chak B."/>
            <person name="Grad Y.H."/>
            <person name="Krasilnikova L.A."/>
            <person name="Lopareva E.N."/>
            <person name="Matranga C.B."/>
            <person name="McNall R.J."/>
            <person name="Metsky H.C."/>
            <person name="Park D.J."/>
            <person name="Piantadosi A."/>
            <person name="Qu J."/>
            <person name="Rota P.A."/>
            <person name="Sabeti P.C."/>
            <person name="Schaffner S.F."/>
            <person name="Shah R."/>
            <person name="Siddle K.J."/>
            <person name="Wharton A.K."/>
            <person name="Wohl S."/>
            <person name="Yozwiak N.L."/>
        </authorList>
    </citation>
    <scope>NUCLEOTIDE SEQUENCE [GENOMIC RNA]</scope>
    <source>
        <strain>MuV/Illinois.USA/26.15/2[G]</strain>
        <strain>MuV/Kansas.USA/8.17[G]</strain>
        <strain>MuV/Louisiana.USA/29.17[G]</strain>
        <strain>MuV/Michigan.USA/4.16[G]</strain>
        <strain>MuV/NewHampshire.USA/8.16/1[G]</strain>
        <strain>MuV/Pennsylvania.USA/19.16[G]</strain>
        <strain>MuV/Texas.USA/18.17/[G]</strain>
    </source>
</reference>
<reference key="6">
    <citation type="submission" date="2020-03" db="EMBL/GenBank/DDBJ databases">
        <authorList>
            <person name="Bodewes R."/>
            <person name="van de Nes-Reijnen L."/>
            <person name="Kerkhof J."/>
            <person name="Cremer J."/>
            <person name="van Binnendijk R."/>
            <person name="Veldhuijzen I.K."/>
        </authorList>
    </citation>
    <scope>NUCLEOTIDE SEQUENCE [GENOMIC RNA]</scope>
    <source>
        <strain>MuV/Eindhoven.NLD/42.18[G]</strain>
        <strain>MuVi/Utrecht.NLD/35.19[G]</strain>
    </source>
</reference>
<reference key="7">
    <citation type="journal article" date="1990" name="J. Virol.">
        <title>RNA editing by G-nucleotide insertion in mumps virus P-gene mRNA transcripts.</title>
        <authorList>
            <person name="Paterson R.G."/>
            <person name="Lamb R.A."/>
        </authorList>
    </citation>
    <scope>RNA EDITING</scope>
    <source>
        <strain>RW</strain>
    </source>
</reference>
<reference key="8">
    <citation type="journal article" date="2014" name="J. Virol.">
        <title>Roles of serine and threonine residues of mumps virus P protein in viral transcription and replication.</title>
        <authorList>
            <person name="Pickar A."/>
            <person name="Xu P."/>
            <person name="Elson A."/>
            <person name="Li Z."/>
            <person name="Zengel J."/>
            <person name="He B."/>
        </authorList>
    </citation>
    <scope>IDENTIFICATION BY MASS SPECTROMETRY</scope>
    <scope>MUTAGENESIS OF THR-101</scope>
    <scope>PHOSPHORYLATION AT THR-10; THR-16; THR-39; SER-69; THR-91; THR-150; THR-165; SER-188; THR-250; SER-257; THR-258; THR-282; SER-374 AND THR-375</scope>
</reference>
<organism>
    <name type="scientific">Mumps orthorubulavirus</name>
    <name type="common">MuV</name>
    <dbReference type="NCBI Taxonomy" id="2560602"/>
    <lineage>
        <taxon>Viruses</taxon>
        <taxon>Riboviria</taxon>
        <taxon>Orthornavirae</taxon>
        <taxon>Negarnaviricota</taxon>
        <taxon>Haploviricotina</taxon>
        <taxon>Monjiviricetes</taxon>
        <taxon>Mononegavirales</taxon>
        <taxon>Paramyxoviridae</taxon>
        <taxon>Rubulavirinae</taxon>
        <taxon>Orthorubulavirus</taxon>
        <taxon>Orthorubulavirus parotitidis</taxon>
    </lineage>
</organism>
<sequence>MDQFIKQDETGDLIETGMNVANHFLSAPIQGTNLLSKATIIPGVAPVLIGNPEQKNIQYPTASHQGSKSKGRSSGAKPIIVSSSEVGTGGTQIPEPLFAQTGQGGTVTTVYQDPTIQPTGSYRSVELAKIGKERMINRFVEKPRTSTPVTEFKRGGPGAAAQGQTIQEEGIDGNGASAGSKERSGSLSGATPYAHLSLPQQDSTPANVGIAQQSAISANEIMDLLRGMDARLQHLEQKVDKVLAQGSMVTQIKNELSTVKTTLATIEGMMATVKIMDPGNPTGVPVDELRRSFSDHVTIVSGPGDVSFSSSEEPTLYLDELARPIPKPRPAKQPKPQPVKDLAGRKVMITKMITDCVANPQMKQAFEQRLAKASTEDALNDIKRDIIRSAI</sequence>
<protein>
    <recommendedName>
        <fullName>Phosphoprotein</fullName>
    </recommendedName>
</protein>
<comment type="function">
    <text evidence="2 3">Essential cofactor of the RNA polymerase L that plays a central role in the transcription and replication by forming the polymerase complex with RNA polymerase L and recruiting L to the genomic N-RNA template for RNA synthesis (By similarity). Also plays a central role in the encapsidation of nascent RNA chains by forming the encapsidation complex with the nucleocapsid protein N (N-P complex). Acts as a chaperone for newly synthesized free N protein, so-called N0, allowing encapsidation of nascent RNA chains during replication (By similarity). The nucleoprotein protein N prevents excessive phosphorylation of P, which leads to down-regulation of viral transcription/ replication. Participates, together with N, in the formation of viral factories (viroplasms), which are large inclusions in the host cytoplasm where replication takes place (By similarity).</text>
</comment>
<comment type="subunit">
    <text evidence="1 3 4">Homotetramer (By similarity). Interacts (via multimerization domain) with polymerase L; this interaction forms the polymerase L-P complex (By similarity). Interacts (via N-terminus) with N0 (via Ncore); this interaction allows P to chaperon N0 to avoid N polymerization before encapsidation (By similarity). Interacts (via C-terminus) with N-RNA template; this interaction positions the polymerase on the template for both transcription and replication (By similarity). Interacts with host RPS6KB1 kinase; this interaction may play a role in the viral replication and transcription (By similarity).</text>
</comment>
<comment type="subcellular location">
    <subcellularLocation>
        <location evidence="1">Virion</location>
    </subcellularLocation>
</comment>
<comment type="domain">
    <text evidence="1 5">The N-terminus consists of a long intrinsically disordered tail. The central part contains the coiled-coil multimerization domain (MD or OD) (By similarity). Forms a four-stranded coiled coil structure (By similarity). The C-terminus constitutes the alpha-helical X domain (XD) that binds to the nucleocapsid (N-RNA complex) and the L polymerase (By similarity).</text>
</comment>
<comment type="RNA editing">
    <location>
        <position position="155" evidence="8"/>
    </location>
    <text>Partially edited. RNA editing at this position consists of an insertion of 2 or 4 guanine nucleotides. The sequence displayed here is the P protein, derived from the edited RNA (+ 2 nucleotides). The unedited RNA gives rise to the V protein. The edited RNA (+ 4 nucleotide) gives rise to the I protein.</text>
</comment>
<comment type="similarity">
    <text evidence="10">Belongs to the rubulavirus/avulavirus P protein family.</text>
</comment>